<dbReference type="EC" id="3.1.-.-" evidence="1"/>
<dbReference type="EMBL" id="AL590842">
    <property type="protein sequence ID" value="CAL19603.1"/>
    <property type="molecule type" value="Genomic_DNA"/>
</dbReference>
<dbReference type="EMBL" id="AE009952">
    <property type="protein sequence ID" value="AAM86873.1"/>
    <property type="molecule type" value="Genomic_DNA"/>
</dbReference>
<dbReference type="EMBL" id="AE017042">
    <property type="protein sequence ID" value="AAS63659.1"/>
    <property type="molecule type" value="Genomic_DNA"/>
</dbReference>
<dbReference type="PIR" id="AI0114">
    <property type="entry name" value="AI0114"/>
</dbReference>
<dbReference type="RefSeq" id="YP_002345984.1">
    <property type="nucleotide sequence ID" value="NC_003143.1"/>
</dbReference>
<dbReference type="SMR" id="Q8ZHG2"/>
<dbReference type="STRING" id="214092.YPO0937"/>
<dbReference type="PaxDb" id="214092-YPO0937"/>
<dbReference type="DNASU" id="1148270"/>
<dbReference type="EnsemblBacteria" id="AAS63659">
    <property type="protein sequence ID" value="AAS63659"/>
    <property type="gene ID" value="YP_3505"/>
</dbReference>
<dbReference type="KEGG" id="ype:YPO0937"/>
<dbReference type="KEGG" id="ypk:y3323"/>
<dbReference type="KEGG" id="ypm:YP_3505"/>
<dbReference type="PATRIC" id="fig|214092.21.peg.1215"/>
<dbReference type="eggNOG" id="COG0816">
    <property type="taxonomic scope" value="Bacteria"/>
</dbReference>
<dbReference type="HOGENOM" id="CLU_098240_3_0_6"/>
<dbReference type="OMA" id="PMGWTAQ"/>
<dbReference type="OrthoDB" id="9796140at2"/>
<dbReference type="Proteomes" id="UP000000815">
    <property type="component" value="Chromosome"/>
</dbReference>
<dbReference type="Proteomes" id="UP000001019">
    <property type="component" value="Chromosome"/>
</dbReference>
<dbReference type="Proteomes" id="UP000002490">
    <property type="component" value="Chromosome"/>
</dbReference>
<dbReference type="GO" id="GO:0005737">
    <property type="term" value="C:cytoplasm"/>
    <property type="evidence" value="ECO:0007669"/>
    <property type="project" value="UniProtKB-SubCell"/>
</dbReference>
<dbReference type="GO" id="GO:0004518">
    <property type="term" value="F:nuclease activity"/>
    <property type="evidence" value="ECO:0007669"/>
    <property type="project" value="UniProtKB-KW"/>
</dbReference>
<dbReference type="GO" id="GO:0000967">
    <property type="term" value="P:rRNA 5'-end processing"/>
    <property type="evidence" value="ECO:0000318"/>
    <property type="project" value="GO_Central"/>
</dbReference>
<dbReference type="CDD" id="cd16964">
    <property type="entry name" value="YqgF"/>
    <property type="match status" value="1"/>
</dbReference>
<dbReference type="FunFam" id="3.30.420.140:FF:000002">
    <property type="entry name" value="Putative pre-16S rRNA nuclease"/>
    <property type="match status" value="1"/>
</dbReference>
<dbReference type="Gene3D" id="3.30.420.140">
    <property type="entry name" value="YqgF/RNase H-like domain"/>
    <property type="match status" value="1"/>
</dbReference>
<dbReference type="HAMAP" id="MF_00651">
    <property type="entry name" value="Nuclease_YqgF"/>
    <property type="match status" value="1"/>
</dbReference>
<dbReference type="InterPro" id="IPR012337">
    <property type="entry name" value="RNaseH-like_sf"/>
</dbReference>
<dbReference type="InterPro" id="IPR005227">
    <property type="entry name" value="YqgF"/>
</dbReference>
<dbReference type="InterPro" id="IPR006641">
    <property type="entry name" value="YqgF/RNaseH-like_dom"/>
</dbReference>
<dbReference type="InterPro" id="IPR037027">
    <property type="entry name" value="YqgF/RNaseH-like_dom_sf"/>
</dbReference>
<dbReference type="NCBIfam" id="TIGR00250">
    <property type="entry name" value="RNAse_H_YqgF"/>
    <property type="match status" value="1"/>
</dbReference>
<dbReference type="PANTHER" id="PTHR33317">
    <property type="entry name" value="POLYNUCLEOTIDYL TRANSFERASE, RIBONUCLEASE H-LIKE SUPERFAMILY PROTEIN"/>
    <property type="match status" value="1"/>
</dbReference>
<dbReference type="PANTHER" id="PTHR33317:SF4">
    <property type="entry name" value="POLYNUCLEOTIDYL TRANSFERASE, RIBONUCLEASE H-LIKE SUPERFAMILY PROTEIN"/>
    <property type="match status" value="1"/>
</dbReference>
<dbReference type="Pfam" id="PF03652">
    <property type="entry name" value="RuvX"/>
    <property type="match status" value="1"/>
</dbReference>
<dbReference type="SMART" id="SM00732">
    <property type="entry name" value="YqgFc"/>
    <property type="match status" value="1"/>
</dbReference>
<dbReference type="SUPFAM" id="SSF53098">
    <property type="entry name" value="Ribonuclease H-like"/>
    <property type="match status" value="1"/>
</dbReference>
<reference key="1">
    <citation type="journal article" date="2001" name="Nature">
        <title>Genome sequence of Yersinia pestis, the causative agent of plague.</title>
        <authorList>
            <person name="Parkhill J."/>
            <person name="Wren B.W."/>
            <person name="Thomson N.R."/>
            <person name="Titball R.W."/>
            <person name="Holden M.T.G."/>
            <person name="Prentice M.B."/>
            <person name="Sebaihia M."/>
            <person name="James K.D."/>
            <person name="Churcher C.M."/>
            <person name="Mungall K.L."/>
            <person name="Baker S."/>
            <person name="Basham D."/>
            <person name="Bentley S.D."/>
            <person name="Brooks K."/>
            <person name="Cerdeno-Tarraga A.-M."/>
            <person name="Chillingworth T."/>
            <person name="Cronin A."/>
            <person name="Davies R.M."/>
            <person name="Davis P."/>
            <person name="Dougan G."/>
            <person name="Feltwell T."/>
            <person name="Hamlin N."/>
            <person name="Holroyd S."/>
            <person name="Jagels K."/>
            <person name="Karlyshev A.V."/>
            <person name="Leather S."/>
            <person name="Moule S."/>
            <person name="Oyston P.C.F."/>
            <person name="Quail M.A."/>
            <person name="Rutherford K.M."/>
            <person name="Simmonds M."/>
            <person name="Skelton J."/>
            <person name="Stevens K."/>
            <person name="Whitehead S."/>
            <person name="Barrell B.G."/>
        </authorList>
    </citation>
    <scope>NUCLEOTIDE SEQUENCE [LARGE SCALE GENOMIC DNA]</scope>
    <source>
        <strain>CO-92 / Biovar Orientalis</strain>
    </source>
</reference>
<reference key="2">
    <citation type="journal article" date="2002" name="J. Bacteriol.">
        <title>Genome sequence of Yersinia pestis KIM.</title>
        <authorList>
            <person name="Deng W."/>
            <person name="Burland V."/>
            <person name="Plunkett G. III"/>
            <person name="Boutin A."/>
            <person name="Mayhew G.F."/>
            <person name="Liss P."/>
            <person name="Perna N.T."/>
            <person name="Rose D.J."/>
            <person name="Mau B."/>
            <person name="Zhou S."/>
            <person name="Schwartz D.C."/>
            <person name="Fetherston J.D."/>
            <person name="Lindler L.E."/>
            <person name="Brubaker R.R."/>
            <person name="Plano G.V."/>
            <person name="Straley S.C."/>
            <person name="McDonough K.A."/>
            <person name="Nilles M.L."/>
            <person name="Matson J.S."/>
            <person name="Blattner F.R."/>
            <person name="Perry R.D."/>
        </authorList>
    </citation>
    <scope>NUCLEOTIDE SEQUENCE [LARGE SCALE GENOMIC DNA]</scope>
    <source>
        <strain>KIM10+ / Biovar Mediaevalis</strain>
    </source>
</reference>
<reference key="3">
    <citation type="journal article" date="2004" name="DNA Res.">
        <title>Complete genome sequence of Yersinia pestis strain 91001, an isolate avirulent to humans.</title>
        <authorList>
            <person name="Song Y."/>
            <person name="Tong Z."/>
            <person name="Wang J."/>
            <person name="Wang L."/>
            <person name="Guo Z."/>
            <person name="Han Y."/>
            <person name="Zhang J."/>
            <person name="Pei D."/>
            <person name="Zhou D."/>
            <person name="Qin H."/>
            <person name="Pang X."/>
            <person name="Han Y."/>
            <person name="Zhai J."/>
            <person name="Li M."/>
            <person name="Cui B."/>
            <person name="Qi Z."/>
            <person name="Jin L."/>
            <person name="Dai R."/>
            <person name="Chen F."/>
            <person name="Li S."/>
            <person name="Ye C."/>
            <person name="Du Z."/>
            <person name="Lin W."/>
            <person name="Wang J."/>
            <person name="Yu J."/>
            <person name="Yang H."/>
            <person name="Wang J."/>
            <person name="Huang P."/>
            <person name="Yang R."/>
        </authorList>
    </citation>
    <scope>NUCLEOTIDE SEQUENCE [LARGE SCALE GENOMIC DNA]</scope>
    <source>
        <strain>91001 / Biovar Mediaevalis</strain>
    </source>
</reference>
<comment type="function">
    <text evidence="1">Could be a nuclease involved in processing of the 5'-end of pre-16S rRNA.</text>
</comment>
<comment type="subcellular location">
    <subcellularLocation>
        <location evidence="1">Cytoplasm</location>
    </subcellularLocation>
</comment>
<comment type="similarity">
    <text evidence="1">Belongs to the YqgF nuclease family.</text>
</comment>
<gene>
    <name evidence="1" type="primary">yqgF</name>
    <name type="ordered locus">YPO0937</name>
    <name type="ordered locus">y3323</name>
    <name type="ordered locus">YP_3505</name>
</gene>
<protein>
    <recommendedName>
        <fullName evidence="1">Putative pre-16S rRNA nuclease</fullName>
        <ecNumber evidence="1">3.1.-.-</ecNumber>
    </recommendedName>
</protein>
<name>YQGF_YERPE</name>
<sequence length="140" mass="15316">MANRTIIAFDFGTKSIGVAIGQEVTGTARALTAFKAQDGTPDWQQVEKLLKEWQPNLVVVGLPLNMDGTEQPLTARARRFANRLHGRFGVQVALQDERLSTVEARANLFDRGGYRALDKGSVDAASAVIILESWFDEQAG</sequence>
<organism>
    <name type="scientific">Yersinia pestis</name>
    <dbReference type="NCBI Taxonomy" id="632"/>
    <lineage>
        <taxon>Bacteria</taxon>
        <taxon>Pseudomonadati</taxon>
        <taxon>Pseudomonadota</taxon>
        <taxon>Gammaproteobacteria</taxon>
        <taxon>Enterobacterales</taxon>
        <taxon>Yersiniaceae</taxon>
        <taxon>Yersinia</taxon>
    </lineage>
</organism>
<proteinExistence type="inferred from homology"/>
<keyword id="KW-0963">Cytoplasm</keyword>
<keyword id="KW-0378">Hydrolase</keyword>
<keyword id="KW-0540">Nuclease</keyword>
<keyword id="KW-1185">Reference proteome</keyword>
<keyword id="KW-0690">Ribosome biogenesis</keyword>
<evidence type="ECO:0000255" key="1">
    <source>
        <dbReference type="HAMAP-Rule" id="MF_00651"/>
    </source>
</evidence>
<feature type="chain" id="PRO_0000172181" description="Putative pre-16S rRNA nuclease">
    <location>
        <begin position="1"/>
        <end position="140"/>
    </location>
</feature>
<accession>Q8ZHG2</accession>
<accession>Q0WIA4</accession>